<evidence type="ECO:0000250" key="1"/>
<evidence type="ECO:0000255" key="2">
    <source>
        <dbReference type="PROSITE-ProRule" id="PRU00703"/>
    </source>
</evidence>
<evidence type="ECO:0000256" key="3">
    <source>
        <dbReference type="SAM" id="MobiDB-lite"/>
    </source>
</evidence>
<evidence type="ECO:0000305" key="4"/>
<gene>
    <name type="primary">SDS23</name>
    <name type="ORF">Kpol_530p44</name>
</gene>
<dbReference type="EMBL" id="DS480411">
    <property type="protein sequence ID" value="EDO17074.1"/>
    <property type="molecule type" value="Genomic_DNA"/>
</dbReference>
<dbReference type="RefSeq" id="XP_001644932.1">
    <property type="nucleotide sequence ID" value="XM_001644882.1"/>
</dbReference>
<dbReference type="SMR" id="A7TL18"/>
<dbReference type="FunCoup" id="A7TL18">
    <property type="interactions" value="228"/>
</dbReference>
<dbReference type="STRING" id="436907.A7TL18"/>
<dbReference type="GeneID" id="5545266"/>
<dbReference type="KEGG" id="vpo:Kpol_530p44"/>
<dbReference type="eggNOG" id="KOG1764">
    <property type="taxonomic scope" value="Eukaryota"/>
</dbReference>
<dbReference type="HOGENOM" id="CLU_024459_1_1_1"/>
<dbReference type="InParanoid" id="A7TL18"/>
<dbReference type="OMA" id="AITNPEM"/>
<dbReference type="OrthoDB" id="449052at2759"/>
<dbReference type="PhylomeDB" id="A7TL18"/>
<dbReference type="Proteomes" id="UP000000267">
    <property type="component" value="Unassembled WGS sequence"/>
</dbReference>
<dbReference type="GO" id="GO:0005737">
    <property type="term" value="C:cytoplasm"/>
    <property type="evidence" value="ECO:0007669"/>
    <property type="project" value="UniProtKB-SubCell"/>
</dbReference>
<dbReference type="GO" id="GO:0005634">
    <property type="term" value="C:nucleus"/>
    <property type="evidence" value="ECO:0007669"/>
    <property type="project" value="UniProtKB-SubCell"/>
</dbReference>
<dbReference type="GO" id="GO:0004865">
    <property type="term" value="F:protein serine/threonine phosphatase inhibitor activity"/>
    <property type="evidence" value="ECO:0007669"/>
    <property type="project" value="TreeGrafter"/>
</dbReference>
<dbReference type="GO" id="GO:0042149">
    <property type="term" value="P:cellular response to glucose starvation"/>
    <property type="evidence" value="ECO:0007669"/>
    <property type="project" value="InterPro"/>
</dbReference>
<dbReference type="GO" id="GO:0030071">
    <property type="term" value="P:regulation of mitotic metaphase/anaphase transition"/>
    <property type="evidence" value="ECO:0007669"/>
    <property type="project" value="InterPro"/>
</dbReference>
<dbReference type="GO" id="GO:0000920">
    <property type="term" value="P:septum digestion after cytokinesis"/>
    <property type="evidence" value="ECO:0007669"/>
    <property type="project" value="EnsemblFungi"/>
</dbReference>
<dbReference type="FunFam" id="3.10.580.10:FF:000035">
    <property type="entry name" value="Protein SDS23"/>
    <property type="match status" value="1"/>
</dbReference>
<dbReference type="FunFam" id="3.10.580.10:FF:000043">
    <property type="entry name" value="Sds23p"/>
    <property type="match status" value="1"/>
</dbReference>
<dbReference type="Gene3D" id="3.10.580.10">
    <property type="entry name" value="CBS-domain"/>
    <property type="match status" value="2"/>
</dbReference>
<dbReference type="InterPro" id="IPR050511">
    <property type="entry name" value="AMPK_gamma/SDS23_families"/>
</dbReference>
<dbReference type="InterPro" id="IPR000644">
    <property type="entry name" value="CBS_dom"/>
</dbReference>
<dbReference type="InterPro" id="IPR046342">
    <property type="entry name" value="CBS_dom_sf"/>
</dbReference>
<dbReference type="InterPro" id="IPR016711">
    <property type="entry name" value="Ssd23"/>
</dbReference>
<dbReference type="PANTHER" id="PTHR13780">
    <property type="entry name" value="AMP-ACTIVATED PROTEIN KINASE, GAMMA REGULATORY SUBUNIT"/>
    <property type="match status" value="1"/>
</dbReference>
<dbReference type="PANTHER" id="PTHR13780:SF36">
    <property type="entry name" value="CBS DOMAIN-CONTAINING PROTEIN"/>
    <property type="match status" value="1"/>
</dbReference>
<dbReference type="Pfam" id="PF00571">
    <property type="entry name" value="CBS"/>
    <property type="match status" value="2"/>
</dbReference>
<dbReference type="PIRSF" id="PIRSF018148">
    <property type="entry name" value="UCP018148_CBS_YBR214w"/>
    <property type="match status" value="1"/>
</dbReference>
<dbReference type="SMART" id="SM00116">
    <property type="entry name" value="CBS"/>
    <property type="match status" value="4"/>
</dbReference>
<dbReference type="SUPFAM" id="SSF54631">
    <property type="entry name" value="CBS-domain pair"/>
    <property type="match status" value="2"/>
</dbReference>
<dbReference type="PROSITE" id="PS51371">
    <property type="entry name" value="CBS"/>
    <property type="match status" value="4"/>
</dbReference>
<proteinExistence type="inferred from homology"/>
<keyword id="KW-0129">CBS domain</keyword>
<keyword id="KW-0963">Cytoplasm</keyword>
<keyword id="KW-0539">Nucleus</keyword>
<keyword id="KW-1185">Reference proteome</keyword>
<keyword id="KW-0677">Repeat</keyword>
<name>SDS23_VANPO</name>
<protein>
    <recommendedName>
        <fullName>Protein SDS23</fullName>
    </recommendedName>
</protein>
<organism>
    <name type="scientific">Vanderwaltozyma polyspora (strain ATCC 22028 / DSM 70294 / BCRC 21397 / CBS 2163 / NBRC 10782 / NRRL Y-8283 / UCD 57-17)</name>
    <name type="common">Kluyveromyces polysporus</name>
    <dbReference type="NCBI Taxonomy" id="436907"/>
    <lineage>
        <taxon>Eukaryota</taxon>
        <taxon>Fungi</taxon>
        <taxon>Dikarya</taxon>
        <taxon>Ascomycota</taxon>
        <taxon>Saccharomycotina</taxon>
        <taxon>Saccharomycetes</taxon>
        <taxon>Saccharomycetales</taxon>
        <taxon>Saccharomycetaceae</taxon>
        <taxon>Vanderwaltozyma</taxon>
    </lineage>
</organism>
<reference key="1">
    <citation type="journal article" date="2007" name="Proc. Natl. Acad. Sci. U.S.A.">
        <title>Independent sorting-out of thousands of duplicated gene pairs in two yeast species descended from a whole-genome duplication.</title>
        <authorList>
            <person name="Scannell D.R."/>
            <person name="Frank A.C."/>
            <person name="Conant G.C."/>
            <person name="Byrne K.P."/>
            <person name="Woolfit M."/>
            <person name="Wolfe K.H."/>
        </authorList>
    </citation>
    <scope>NUCLEOTIDE SEQUENCE [LARGE SCALE GENOMIC DNA]</scope>
    <source>
        <strain>ATCC 22028 / DSM 70294 / BCRC 21397 / CBS 2163 / NBRC 10782 / NRRL Y-8283 / UCD 57-17</strain>
    </source>
</reference>
<sequence>MSTNISNKNSMSTSGSNNNTNNNNNSGCSSSNSSQRHNSIVELLSTPPQLPHQHHFNKSRQNSNLNESMSDSGESGLRRVDSYSSNDSISILSINSAHNHTDVGDVIINNELTASTTASTVGSGNSNQLTQTTSQCISSTHSQKWQHIQLTQLIEQNKLITVQGSISIEEAFNTLMKYHLTSLPVESYPGDMNCFTFDYNDLNSYLLLVLNKITVNNREITQDCQNGKPVPVGEIIKLTPKNPFYKLPETENLSTVLGILGSGVHRVAITNTEMTKIKGILSQRRLIKYLWDNARSFPSLEPLFNSSLQELQIGVLNTHSKPTSKQSRVISIQGEEPLINALYKIHEERISSIAVVDHQNNLIGNISVTDVKYVTRTSQYPLLHNTCRHFISVILNTRGLEMGKDSFPIFHVYPTSSLARTLAKLVATKSHRLWIVQPPEPSDINTGNTSNPASSHSPMMTAVDHSPSQTPNVSPTNLFEKEYRTGKLIGVISLTDILSVLARKQTDNKQVDPLSARRQRGSVSM</sequence>
<comment type="function">
    <text evidence="1">Involved in DNA replication and cell separation.</text>
</comment>
<comment type="subcellular location">
    <subcellularLocation>
        <location evidence="1">Cytoplasm</location>
    </subcellularLocation>
    <subcellularLocation>
        <location evidence="1">Nucleus</location>
    </subcellularLocation>
</comment>
<comment type="similarity">
    <text evidence="4">Belongs to the SDS23 family.</text>
</comment>
<feature type="chain" id="PRO_0000324961" description="Protein SDS23">
    <location>
        <begin position="1"/>
        <end position="525"/>
    </location>
</feature>
<feature type="domain" description="CBS 1" evidence="2">
    <location>
        <begin position="154"/>
        <end position="215"/>
    </location>
</feature>
<feature type="domain" description="CBS 2" evidence="2">
    <location>
        <begin position="238"/>
        <end position="296"/>
    </location>
</feature>
<feature type="domain" description="CBS 3" evidence="2">
    <location>
        <begin position="323"/>
        <end position="382"/>
    </location>
</feature>
<feature type="domain" description="CBS 4" evidence="2">
    <location>
        <begin position="439"/>
        <end position="508"/>
    </location>
</feature>
<feature type="region of interest" description="Disordered" evidence="3">
    <location>
        <begin position="1"/>
        <end position="81"/>
    </location>
</feature>
<feature type="region of interest" description="Disordered" evidence="3">
    <location>
        <begin position="438"/>
        <end position="475"/>
    </location>
</feature>
<feature type="compositionally biased region" description="Low complexity" evidence="3">
    <location>
        <begin position="1"/>
        <end position="34"/>
    </location>
</feature>
<feature type="compositionally biased region" description="Polar residues" evidence="3">
    <location>
        <begin position="59"/>
        <end position="73"/>
    </location>
</feature>
<feature type="compositionally biased region" description="Polar residues" evidence="3">
    <location>
        <begin position="443"/>
        <end position="458"/>
    </location>
</feature>
<feature type="compositionally biased region" description="Polar residues" evidence="3">
    <location>
        <begin position="466"/>
        <end position="475"/>
    </location>
</feature>
<accession>A7TL18</accession>